<accession>Q9CJV6</accession>
<protein>
    <recommendedName>
        <fullName evidence="1">Nucleoid-associated protein PM1885</fullName>
    </recommendedName>
</protein>
<keyword id="KW-0963">Cytoplasm</keyword>
<keyword id="KW-1185">Reference proteome</keyword>
<name>NDPA_PASMU</name>
<organism>
    <name type="scientific">Pasteurella multocida (strain Pm70)</name>
    <dbReference type="NCBI Taxonomy" id="272843"/>
    <lineage>
        <taxon>Bacteria</taxon>
        <taxon>Pseudomonadati</taxon>
        <taxon>Pseudomonadota</taxon>
        <taxon>Gammaproteobacteria</taxon>
        <taxon>Pasteurellales</taxon>
        <taxon>Pasteurellaceae</taxon>
        <taxon>Pasteurella</taxon>
    </lineage>
</organism>
<sequence length="338" mass="38252">MSINVNEIVLHQITKSIEGDAMKLNTMLRERLLTITPEVEQMMLQLHQAYQNKSKAYAVFNENSLFAQDLNRFLEHESEFLDFSQKATALLVNELSRYPFADEGTLVLCRYNFLATDYLFIALLDSRASMLVDEQLEIHRTKYLEISQFDIAARLNLTELSLDAKSDRYLTFVKGRVGRKIGDFFMDFLGAEEGLNPQVQNQCLLQAVSDYCAQADLSKEQSQAVKKQVFEYCKGQMNVGEEIALTELSATMPTLNEQAFASFAAEQAYGLAEHIPPVRSALKTLTKFSGSGKGITLSFDAELINQRVFWDEATDSLTIQGLPPNLRDQLQRQLKGQN</sequence>
<reference key="1">
    <citation type="journal article" date="2001" name="Proc. Natl. Acad. Sci. U.S.A.">
        <title>Complete genomic sequence of Pasteurella multocida Pm70.</title>
        <authorList>
            <person name="May B.J."/>
            <person name="Zhang Q."/>
            <person name="Li L.L."/>
            <person name="Paustian M.L."/>
            <person name="Whittam T.S."/>
            <person name="Kapur V."/>
        </authorList>
    </citation>
    <scope>NUCLEOTIDE SEQUENCE [LARGE SCALE GENOMIC DNA]</scope>
    <source>
        <strain>Pm70</strain>
    </source>
</reference>
<proteinExistence type="inferred from homology"/>
<evidence type="ECO:0000255" key="1">
    <source>
        <dbReference type="HAMAP-Rule" id="MF_00730"/>
    </source>
</evidence>
<gene>
    <name type="ordered locus">PM1885</name>
</gene>
<comment type="subcellular location">
    <subcellularLocation>
        <location evidence="1">Cytoplasm</location>
        <location evidence="1">Nucleoid</location>
    </subcellularLocation>
</comment>
<comment type="similarity">
    <text evidence="1">Belongs to the YejK family.</text>
</comment>
<feature type="chain" id="PRO_0000210910" description="Nucleoid-associated protein PM1885">
    <location>
        <begin position="1"/>
        <end position="338"/>
    </location>
</feature>
<dbReference type="EMBL" id="AE004439">
    <property type="protein sequence ID" value="AAK03969.1"/>
    <property type="molecule type" value="Genomic_DNA"/>
</dbReference>
<dbReference type="SMR" id="Q9CJV6"/>
<dbReference type="STRING" id="272843.PM1885"/>
<dbReference type="EnsemblBacteria" id="AAK03969">
    <property type="protein sequence ID" value="AAK03969"/>
    <property type="gene ID" value="PM1885"/>
</dbReference>
<dbReference type="KEGG" id="pmu:PM1885"/>
<dbReference type="HOGENOM" id="CLU_063050_0_1_6"/>
<dbReference type="OrthoDB" id="9131762at2"/>
<dbReference type="Proteomes" id="UP000000809">
    <property type="component" value="Chromosome"/>
</dbReference>
<dbReference type="GO" id="GO:0043590">
    <property type="term" value="C:bacterial nucleoid"/>
    <property type="evidence" value="ECO:0007669"/>
    <property type="project" value="TreeGrafter"/>
</dbReference>
<dbReference type="GO" id="GO:0005737">
    <property type="term" value="C:cytoplasm"/>
    <property type="evidence" value="ECO:0007669"/>
    <property type="project" value="UniProtKB-UniRule"/>
</dbReference>
<dbReference type="GO" id="GO:0003690">
    <property type="term" value="F:double-stranded DNA binding"/>
    <property type="evidence" value="ECO:0007669"/>
    <property type="project" value="TreeGrafter"/>
</dbReference>
<dbReference type="GO" id="GO:0003727">
    <property type="term" value="F:single-stranded RNA binding"/>
    <property type="evidence" value="ECO:0007669"/>
    <property type="project" value="TreeGrafter"/>
</dbReference>
<dbReference type="HAMAP" id="MF_00730">
    <property type="entry name" value="NdpA"/>
    <property type="match status" value="1"/>
</dbReference>
<dbReference type="InterPro" id="IPR007358">
    <property type="entry name" value="Nucleoid_associated_NdpA"/>
</dbReference>
<dbReference type="NCBIfam" id="NF001557">
    <property type="entry name" value="PRK00378.1"/>
    <property type="match status" value="1"/>
</dbReference>
<dbReference type="PANTHER" id="PTHR38772">
    <property type="match status" value="1"/>
</dbReference>
<dbReference type="PANTHER" id="PTHR38772:SF1">
    <property type="entry name" value="NUCLEOID-ASSOCIATED PROTEIN YEJK"/>
    <property type="match status" value="1"/>
</dbReference>
<dbReference type="Pfam" id="PF04245">
    <property type="entry name" value="NA37"/>
    <property type="match status" value="1"/>
</dbReference>